<protein>
    <recommendedName>
        <fullName>MAP7 domain-containing protein 2</fullName>
    </recommendedName>
    <alternativeName>
        <fullName evidence="7">Brain-enriched E-MAP-115-like protein</fullName>
    </alternativeName>
</protein>
<evidence type="ECO:0000250" key="1">
    <source>
        <dbReference type="UniProtKB" id="A2AG50"/>
    </source>
</evidence>
<evidence type="ECO:0000250" key="2">
    <source>
        <dbReference type="UniProtKB" id="Q96T17"/>
    </source>
</evidence>
<evidence type="ECO:0000255" key="3"/>
<evidence type="ECO:0000256" key="4">
    <source>
        <dbReference type="SAM" id="MobiDB-lite"/>
    </source>
</evidence>
<evidence type="ECO:0000269" key="5">
    <source>
    </source>
</evidence>
<evidence type="ECO:0000269" key="6">
    <source>
    </source>
</evidence>
<evidence type="ECO:0000303" key="7">
    <source ref="1"/>
</evidence>
<evidence type="ECO:0000305" key="8"/>
<evidence type="ECO:0007744" key="9">
    <source>
    </source>
</evidence>
<comment type="function">
    <text evidence="1 5">Microtubule-stabilizing protein involved in the control of cell motility and neurite outgrowth (By similarity). Acts as a critical cofactor for kinesin transport; in the proximal axon regulates kinesin-1 family members, KIF5A, KIF5B and KIF5C recruitment to microtubules and contributes to kinesin-1-mediated transport in the axons (PubMed:30784582).</text>
</comment>
<comment type="subunit">
    <text evidence="5 6">Interacts (via N-terminus) with microtubules; facilitates microtubule stabilization (PubMed:30784582, PubMed:35470240). Interacts with kinesin-1 family members, KIF5A, KIF5B and KIF5C (PubMed:30784582, PubMed:35470240).</text>
</comment>
<comment type="subcellular location">
    <subcellularLocation>
        <location evidence="6">Cytoplasm</location>
        <location evidence="6">Cytoskeleton</location>
        <location evidence="6">Microtubule organizing center</location>
        <location evidence="6">Centrosome</location>
    </subcellularLocation>
    <subcellularLocation>
        <location evidence="6">Cytoplasm</location>
        <location evidence="6">Cytoskeleton</location>
    </subcellularLocation>
    <subcellularLocation>
        <location evidence="2">Cell projection</location>
        <location evidence="2">Axon</location>
    </subcellularLocation>
    <text evidence="2">Accumulates to the proximal part of the axon.</text>
</comment>
<comment type="tissue specificity">
    <text evidence="6">Detected only in the brain and testis (at the protein level).</text>
</comment>
<comment type="similarity">
    <text evidence="8">Belongs to the MAP7 family.</text>
</comment>
<feature type="chain" id="PRO_0000462090" description="MAP7 domain-containing protein 2">
    <location>
        <begin position="1"/>
        <end position="763"/>
    </location>
</feature>
<feature type="region of interest" description="Disordered" evidence="4">
    <location>
        <begin position="1"/>
        <end position="72"/>
    </location>
</feature>
<feature type="region of interest" description="Disordered" evidence="4">
    <location>
        <begin position="102"/>
        <end position="127"/>
    </location>
</feature>
<feature type="region of interest" description="Disordered" evidence="4">
    <location>
        <begin position="140"/>
        <end position="531"/>
    </location>
</feature>
<feature type="coiled-coil region" evidence="3">
    <location>
        <begin position="434"/>
        <end position="575"/>
    </location>
</feature>
<feature type="compositionally biased region" description="Gly residues" evidence="4">
    <location>
        <begin position="1"/>
        <end position="11"/>
    </location>
</feature>
<feature type="compositionally biased region" description="Low complexity" evidence="4">
    <location>
        <begin position="12"/>
        <end position="31"/>
    </location>
</feature>
<feature type="compositionally biased region" description="Basic and acidic residues" evidence="4">
    <location>
        <begin position="53"/>
        <end position="72"/>
    </location>
</feature>
<feature type="compositionally biased region" description="Polar residues" evidence="4">
    <location>
        <begin position="184"/>
        <end position="212"/>
    </location>
</feature>
<feature type="compositionally biased region" description="Polar residues" evidence="4">
    <location>
        <begin position="241"/>
        <end position="251"/>
    </location>
</feature>
<feature type="compositionally biased region" description="Low complexity" evidence="4">
    <location>
        <begin position="312"/>
        <end position="321"/>
    </location>
</feature>
<feature type="compositionally biased region" description="Basic and acidic residues" evidence="4">
    <location>
        <begin position="354"/>
        <end position="372"/>
    </location>
</feature>
<feature type="compositionally biased region" description="Basic and acidic residues" evidence="4">
    <location>
        <begin position="381"/>
        <end position="420"/>
    </location>
</feature>
<feature type="compositionally biased region" description="Basic and acidic residues" evidence="4">
    <location>
        <begin position="437"/>
        <end position="531"/>
    </location>
</feature>
<name>MA7D2_RAT</name>
<organism>
    <name type="scientific">Rattus norvegicus</name>
    <name type="common">Rat</name>
    <dbReference type="NCBI Taxonomy" id="10116"/>
    <lineage>
        <taxon>Eukaryota</taxon>
        <taxon>Metazoa</taxon>
        <taxon>Chordata</taxon>
        <taxon>Craniata</taxon>
        <taxon>Vertebrata</taxon>
        <taxon>Euteleostomi</taxon>
        <taxon>Mammalia</taxon>
        <taxon>Eutheria</taxon>
        <taxon>Euarchontoglires</taxon>
        <taxon>Glires</taxon>
        <taxon>Rodentia</taxon>
        <taxon>Myomorpha</taxon>
        <taxon>Muroidea</taxon>
        <taxon>Muridae</taxon>
        <taxon>Murinae</taxon>
        <taxon>Rattus</taxon>
    </lineage>
</organism>
<proteinExistence type="evidence at protein level"/>
<dbReference type="EMBL" id="AB266744">
    <property type="protein sequence ID" value="BAO37336.1"/>
    <property type="molecule type" value="mRNA"/>
</dbReference>
<dbReference type="RefSeq" id="NP_001276707.1">
    <property type="nucleotide sequence ID" value="NM_001289778.2"/>
</dbReference>
<dbReference type="FunCoup" id="D4A4L4">
    <property type="interactions" value="1064"/>
</dbReference>
<dbReference type="IntAct" id="D4A4L4">
    <property type="interactions" value="1"/>
</dbReference>
<dbReference type="STRING" id="10116.ENSRNOP00000042347"/>
<dbReference type="GlyGen" id="D4A4L4">
    <property type="glycosylation" value="1 site"/>
</dbReference>
<dbReference type="Ensembl" id="ENSRNOT00000045285.7">
    <property type="protein sequence ID" value="ENSRNOP00000042347.6"/>
    <property type="gene ID" value="ENSRNOG00000005176.9"/>
</dbReference>
<dbReference type="Ensembl" id="ENSRNOT00055047488">
    <property type="protein sequence ID" value="ENSRNOP00055039065"/>
    <property type="gene ID" value="ENSRNOG00055027423"/>
</dbReference>
<dbReference type="Ensembl" id="ENSRNOT00060033678">
    <property type="protein sequence ID" value="ENSRNOP00060027568"/>
    <property type="gene ID" value="ENSRNOG00060019425"/>
</dbReference>
<dbReference type="Ensembl" id="ENSRNOT00065021853">
    <property type="protein sequence ID" value="ENSRNOP00065016931"/>
    <property type="gene ID" value="ENSRNOG00065013295"/>
</dbReference>
<dbReference type="GeneID" id="317508"/>
<dbReference type="KEGG" id="rno:317508"/>
<dbReference type="AGR" id="RGD:1564852"/>
<dbReference type="CTD" id="256714"/>
<dbReference type="RGD" id="1564852">
    <property type="gene designation" value="Map7d2"/>
</dbReference>
<dbReference type="VEuPathDB" id="HostDB:ENSRNOG00000005176"/>
<dbReference type="eggNOG" id="ENOG502QTSG">
    <property type="taxonomic scope" value="Eukaryota"/>
</dbReference>
<dbReference type="GeneTree" id="ENSGT00950000182941"/>
<dbReference type="HOGENOM" id="CLU_017315_1_0_1"/>
<dbReference type="OMA" id="QVKNNTH"/>
<dbReference type="OrthoDB" id="4266661at2759"/>
<dbReference type="TreeFam" id="TF332273"/>
<dbReference type="Proteomes" id="UP000002494">
    <property type="component" value="Chromosome X"/>
</dbReference>
<dbReference type="Bgee" id="ENSRNOG00000005176">
    <property type="expression patterns" value="Expressed in cerebellum and 15 other cell types or tissues"/>
</dbReference>
<dbReference type="GO" id="GO:0030424">
    <property type="term" value="C:axon"/>
    <property type="evidence" value="ECO:0000314"/>
    <property type="project" value="UniProtKB"/>
</dbReference>
<dbReference type="GO" id="GO:0005813">
    <property type="term" value="C:centrosome"/>
    <property type="evidence" value="ECO:0000314"/>
    <property type="project" value="UniProtKB"/>
</dbReference>
<dbReference type="GO" id="GO:0005874">
    <property type="term" value="C:microtubule"/>
    <property type="evidence" value="ECO:0007669"/>
    <property type="project" value="Ensembl"/>
</dbReference>
<dbReference type="GO" id="GO:0015630">
    <property type="term" value="C:microtubule cytoskeleton"/>
    <property type="evidence" value="ECO:0000314"/>
    <property type="project" value="UniProtKB"/>
</dbReference>
<dbReference type="GO" id="GO:0030496">
    <property type="term" value="C:midbody"/>
    <property type="evidence" value="ECO:0000250"/>
    <property type="project" value="UniProtKB"/>
</dbReference>
<dbReference type="GO" id="GO:0019894">
    <property type="term" value="F:kinesin binding"/>
    <property type="evidence" value="ECO:0000314"/>
    <property type="project" value="UniProtKB"/>
</dbReference>
<dbReference type="GO" id="GO:0008017">
    <property type="term" value="F:microtubule binding"/>
    <property type="evidence" value="ECO:0000314"/>
    <property type="project" value="UniProtKB"/>
</dbReference>
<dbReference type="GO" id="GO:0061564">
    <property type="term" value="P:axon development"/>
    <property type="evidence" value="ECO:0000315"/>
    <property type="project" value="UniProtKB"/>
</dbReference>
<dbReference type="GO" id="GO:0000226">
    <property type="term" value="P:microtubule cytoskeleton organization"/>
    <property type="evidence" value="ECO:0000315"/>
    <property type="project" value="UniProtKB"/>
</dbReference>
<dbReference type="InterPro" id="IPR051483">
    <property type="entry name" value="MAP7_domain-containing"/>
</dbReference>
<dbReference type="InterPro" id="IPR008604">
    <property type="entry name" value="MAP7_fam"/>
</dbReference>
<dbReference type="PANTHER" id="PTHR15073:SF3">
    <property type="entry name" value="MAP7 DOMAIN-CONTAINING PROTEIN 2"/>
    <property type="match status" value="1"/>
</dbReference>
<dbReference type="PANTHER" id="PTHR15073">
    <property type="entry name" value="MICROTUBULE-ASSOCIATED PROTEIN"/>
    <property type="match status" value="1"/>
</dbReference>
<dbReference type="Pfam" id="PF05672">
    <property type="entry name" value="MAP7"/>
    <property type="match status" value="1"/>
</dbReference>
<reference key="1">
    <citation type="submission" date="2006-07" db="EMBL/GenBank/DDBJ databases">
        <title>Brelin, a novel microtubule-associated protein regulated by cyclin-dependent protein kinase 5-catalyzed phosphorylation.</title>
        <authorList>
            <person name="Kuramoto T."/>
            <person name="Uezu A."/>
            <person name="Yamamoto H."/>
            <person name="Kanda K."/>
            <person name="Sakamoto T."/>
            <person name="Saito T."/>
            <person name="Hisanaga S."/>
            <person name="Nakanishi H."/>
        </authorList>
    </citation>
    <scope>NUCLEOTIDE SEQUENCE [MRNA]</scope>
</reference>
<reference key="2">
    <citation type="journal article" date="2004" name="Nature">
        <title>Genome sequence of the Brown Norway rat yields insights into mammalian evolution.</title>
        <authorList>
            <person name="Gibbs R.A."/>
            <person name="Weinstock G.M."/>
            <person name="Metzker M.L."/>
            <person name="Muzny D.M."/>
            <person name="Sodergren E.J."/>
            <person name="Scherer S."/>
            <person name="Scott G."/>
            <person name="Steffen D."/>
            <person name="Worley K.C."/>
            <person name="Burch P.E."/>
            <person name="Okwuonu G."/>
            <person name="Hines S."/>
            <person name="Lewis L."/>
            <person name="Deramo C."/>
            <person name="Delgado O."/>
            <person name="Dugan-Rocha S."/>
            <person name="Miner G."/>
            <person name="Morgan M."/>
            <person name="Hawes A."/>
            <person name="Gill R."/>
            <person name="Holt R.A."/>
            <person name="Adams M.D."/>
            <person name="Amanatides P.G."/>
            <person name="Baden-Tillson H."/>
            <person name="Barnstead M."/>
            <person name="Chin S."/>
            <person name="Evans C.A."/>
            <person name="Ferriera S."/>
            <person name="Fosler C."/>
            <person name="Glodek A."/>
            <person name="Gu Z."/>
            <person name="Jennings D."/>
            <person name="Kraft C.L."/>
            <person name="Nguyen T."/>
            <person name="Pfannkoch C.M."/>
            <person name="Sitter C."/>
            <person name="Sutton G.G."/>
            <person name="Venter J.C."/>
            <person name="Woodage T."/>
            <person name="Smith D."/>
            <person name="Lee H.-M."/>
            <person name="Gustafson E."/>
            <person name="Cahill P."/>
            <person name="Kana A."/>
            <person name="Doucette-Stamm L."/>
            <person name="Weinstock K."/>
            <person name="Fechtel K."/>
            <person name="Weiss R.B."/>
            <person name="Dunn D.M."/>
            <person name="Green E.D."/>
            <person name="Blakesley R.W."/>
            <person name="Bouffard G.G."/>
            <person name="De Jong P.J."/>
            <person name="Osoegawa K."/>
            <person name="Zhu B."/>
            <person name="Marra M."/>
            <person name="Schein J."/>
            <person name="Bosdet I."/>
            <person name="Fjell C."/>
            <person name="Jones S."/>
            <person name="Krzywinski M."/>
            <person name="Mathewson C."/>
            <person name="Siddiqui A."/>
            <person name="Wye N."/>
            <person name="McPherson J."/>
            <person name="Zhao S."/>
            <person name="Fraser C.M."/>
            <person name="Shetty J."/>
            <person name="Shatsman S."/>
            <person name="Geer K."/>
            <person name="Chen Y."/>
            <person name="Abramzon S."/>
            <person name="Nierman W.C."/>
            <person name="Havlak P.H."/>
            <person name="Chen R."/>
            <person name="Durbin K.J."/>
            <person name="Egan A."/>
            <person name="Ren Y."/>
            <person name="Song X.-Z."/>
            <person name="Li B."/>
            <person name="Liu Y."/>
            <person name="Qin X."/>
            <person name="Cawley S."/>
            <person name="Cooney A.J."/>
            <person name="D'Souza L.M."/>
            <person name="Martin K."/>
            <person name="Wu J.Q."/>
            <person name="Gonzalez-Garay M.L."/>
            <person name="Jackson A.R."/>
            <person name="Kalafus K.J."/>
            <person name="McLeod M.P."/>
            <person name="Milosavljevic A."/>
            <person name="Virk D."/>
            <person name="Volkov A."/>
            <person name="Wheeler D.A."/>
            <person name="Zhang Z."/>
            <person name="Bailey J.A."/>
            <person name="Eichler E.E."/>
            <person name="Tuzun E."/>
            <person name="Birney E."/>
            <person name="Mongin E."/>
            <person name="Ureta-Vidal A."/>
            <person name="Woodwark C."/>
            <person name="Zdobnov E."/>
            <person name="Bork P."/>
            <person name="Suyama M."/>
            <person name="Torrents D."/>
            <person name="Alexandersson M."/>
            <person name="Trask B.J."/>
            <person name="Young J.M."/>
            <person name="Huang H."/>
            <person name="Wang H."/>
            <person name="Xing H."/>
            <person name="Daniels S."/>
            <person name="Gietzen D."/>
            <person name="Schmidt J."/>
            <person name="Stevens K."/>
            <person name="Vitt U."/>
            <person name="Wingrove J."/>
            <person name="Camara F."/>
            <person name="Mar Alba M."/>
            <person name="Abril J.F."/>
            <person name="Guigo R."/>
            <person name="Smit A."/>
            <person name="Dubchak I."/>
            <person name="Rubin E.M."/>
            <person name="Couronne O."/>
            <person name="Poliakov A."/>
            <person name="Huebner N."/>
            <person name="Ganten D."/>
            <person name="Goesele C."/>
            <person name="Hummel O."/>
            <person name="Kreitler T."/>
            <person name="Lee Y.-A."/>
            <person name="Monti J."/>
            <person name="Schulz H."/>
            <person name="Zimdahl H."/>
            <person name="Himmelbauer H."/>
            <person name="Lehrach H."/>
            <person name="Jacob H.J."/>
            <person name="Bromberg S."/>
            <person name="Gullings-Handley J."/>
            <person name="Jensen-Seaman M.I."/>
            <person name="Kwitek A.E."/>
            <person name="Lazar J."/>
            <person name="Pasko D."/>
            <person name="Tonellato P.J."/>
            <person name="Twigger S."/>
            <person name="Ponting C.P."/>
            <person name="Duarte J.M."/>
            <person name="Rice S."/>
            <person name="Goodstadt L."/>
            <person name="Beatson S.A."/>
            <person name="Emes R.D."/>
            <person name="Winter E.E."/>
            <person name="Webber C."/>
            <person name="Brandt P."/>
            <person name="Nyakatura G."/>
            <person name="Adetobi M."/>
            <person name="Chiaromonte F."/>
            <person name="Elnitski L."/>
            <person name="Eswara P."/>
            <person name="Hardison R.C."/>
            <person name="Hou M."/>
            <person name="Kolbe D."/>
            <person name="Makova K."/>
            <person name="Miller W."/>
            <person name="Nekrutenko A."/>
            <person name="Riemer C."/>
            <person name="Schwartz S."/>
            <person name="Taylor J."/>
            <person name="Yang S."/>
            <person name="Zhang Y."/>
            <person name="Lindpaintner K."/>
            <person name="Andrews T.D."/>
            <person name="Caccamo M."/>
            <person name="Clamp M."/>
            <person name="Clarke L."/>
            <person name="Curwen V."/>
            <person name="Durbin R.M."/>
            <person name="Eyras E."/>
            <person name="Searle S.M."/>
            <person name="Cooper G.M."/>
            <person name="Batzoglou S."/>
            <person name="Brudno M."/>
            <person name="Sidow A."/>
            <person name="Stone E.A."/>
            <person name="Payseur B.A."/>
            <person name="Bourque G."/>
            <person name="Lopez-Otin C."/>
            <person name="Puente X.S."/>
            <person name="Chakrabarti K."/>
            <person name="Chatterji S."/>
            <person name="Dewey C."/>
            <person name="Pachter L."/>
            <person name="Bray N."/>
            <person name="Yap V.B."/>
            <person name="Caspi A."/>
            <person name="Tesler G."/>
            <person name="Pevzner P.A."/>
            <person name="Haussler D."/>
            <person name="Roskin K.M."/>
            <person name="Baertsch R."/>
            <person name="Clawson H."/>
            <person name="Furey T.S."/>
            <person name="Hinrichs A.S."/>
            <person name="Karolchik D."/>
            <person name="Kent W.J."/>
            <person name="Rosenbloom K.R."/>
            <person name="Trumbower H."/>
            <person name="Weirauch M."/>
            <person name="Cooper D.N."/>
            <person name="Stenson P.D."/>
            <person name="Ma B."/>
            <person name="Brent M."/>
            <person name="Arumugam M."/>
            <person name="Shteynberg D."/>
            <person name="Copley R.R."/>
            <person name="Taylor M.S."/>
            <person name="Riethman H."/>
            <person name="Mudunuri U."/>
            <person name="Peterson J."/>
            <person name="Guyer M."/>
            <person name="Felsenfeld A."/>
            <person name="Old S."/>
            <person name="Mockrin S."/>
            <person name="Collins F.S."/>
        </authorList>
    </citation>
    <scope>NUCLEOTIDE SEQUENCE [LARGE SCALE GENOMIC DNA]</scope>
    <source>
        <strain>Brown Norway</strain>
    </source>
</reference>
<reference evidence="9" key="3">
    <citation type="journal article" date="2012" name="Nat. Commun.">
        <title>Quantitative maps of protein phosphorylation sites across 14 different rat organs and tissues.</title>
        <authorList>
            <person name="Lundby A."/>
            <person name="Secher A."/>
            <person name="Lage K."/>
            <person name="Nordsborg N.B."/>
            <person name="Dmytriyev A."/>
            <person name="Lundby C."/>
            <person name="Olsen J.V."/>
        </authorList>
    </citation>
    <scope>IDENTIFICATION BY MASS SPECTROMETRY [LARGE SCALE ANALYSIS]</scope>
</reference>
<reference key="4">
    <citation type="journal article" date="2019" name="Cell Rep.">
        <title>MAP7D2 Localizes to the Proximal Axon and Locally Promotes Kinesin-1-Mediated Cargo Transport into the Axon.</title>
        <authorList>
            <person name="Pan X."/>
            <person name="Cao Y."/>
            <person name="Stucchi R."/>
            <person name="Hooikaas P.J."/>
            <person name="Portegies S."/>
            <person name="Will L."/>
            <person name="Martin M."/>
            <person name="Akhmanova A."/>
            <person name="Harterink M."/>
            <person name="Hoogenraad C.C."/>
        </authorList>
    </citation>
    <scope>FUNCTION</scope>
    <scope>SUBUNIT</scope>
</reference>
<reference key="5">
    <citation type="journal article" date="2022" name="Life. Sci Alliance">
        <title>Map7D2 and Map7D1 facilitate microtubule stabilization through distinct mechanisms in neuronal cells.</title>
        <authorList>
            <person name="Kikuchi K."/>
            <person name="Sakamoto Y."/>
            <person name="Uezu A."/>
            <person name="Yamamoto H."/>
            <person name="Ishiguro K.I."/>
            <person name="Shimamura K."/>
            <person name="Saito T."/>
            <person name="Hisanaga S.I."/>
            <person name="Nakanishi H."/>
        </authorList>
    </citation>
    <scope>TISSUE SPECIFICITY</scope>
    <scope>SUBCELLULAR LOCATION</scope>
    <scope>INTERACTION WITH MICROTUBULES</scope>
    <scope>SUBUNIT</scope>
</reference>
<sequence>MERSGGNGAGARAGAPSEGAAKGSSLLSAKSTEGATGRFSQSTPRPTGMDGFLKSDERQRLAKERREEREKCLAAREQQILEKQKRAKLQYEKQIEERWRKLEEQRQREDQKRAAVEEKRKQKLREEEERLEAMMRRSLERTQQLELKKKCSWAGSAASGPGGRDGESENTPPLPLTLAASIPPSDTGTATAAAESTNACDKLSTSTMNLPKQTEPPMSKHLSSSIVAISYSPDRALRSPLKSSYKSSPTRTTEKKKNTLLSGVGDAGKGAMTGGEPSQMEKVKKGRGATSVSSGGLGSPLRRCEPPENISKRSSSPVKSKVTAKTYPQSPKTVKPTYIGSPVKYYFPPTPSEETLKKKAEKEKSNKEKEGATGRQTTVLPREETLEKPMADKDATEKYVADKHATEKHSATGGKAEHSAGKSTAGTTDAGEAAKILAEKRRQARLQKEQEEQERLEKEEQERLEKEELKRKAEEERLRIEKQEEEKKQQEEEEKRKAEEKAKEKAEEELLSKEEQEKEKQEKEKKEKAMIEKQIQAEKEAAEAKAQDAAKQMRLEREQIMLQIEQERLERKKRIDEIMKRTRKSDASLEVKKEDPKVEIQPLPDVENKIKPVVPNKIEINVLNTCQKVNVSERAAPETFPQDIFSNGLKPVGGPVHPDVLDGKSNSLDDSTEEVQSMDVSPVSKEELISIPEFSPVSEMIPGMSLDQNGTGNARALQDILDFTGPPAFPKKSSENLSLDDCNKNLIEGFNSPGQETTLNTFC</sequence>
<gene>
    <name type="primary">Map7d2</name>
    <name evidence="7" type="synonym">Brelin</name>
    <name type="synonym">Mtap7d2</name>
</gene>
<keyword id="KW-0966">Cell projection</keyword>
<keyword id="KW-0175">Coiled coil</keyword>
<keyword id="KW-0963">Cytoplasm</keyword>
<keyword id="KW-0206">Cytoskeleton</keyword>
<keyword id="KW-1185">Reference proteome</keyword>
<accession>D4A4L4</accession>
<accession>W0T3G7</accession>